<dbReference type="EC" id="2.7.1.30" evidence="1"/>
<dbReference type="EMBL" id="AE015927">
    <property type="protein sequence ID" value="AAO36927.1"/>
    <property type="molecule type" value="Genomic_DNA"/>
</dbReference>
<dbReference type="RefSeq" id="WP_011100588.1">
    <property type="nucleotide sequence ID" value="NC_004557.1"/>
</dbReference>
<dbReference type="SMR" id="Q891B8"/>
<dbReference type="STRING" id="212717.CTC_02462"/>
<dbReference type="GeneID" id="24252493"/>
<dbReference type="KEGG" id="ctc:CTC_02462"/>
<dbReference type="HOGENOM" id="CLU_009281_2_3_9"/>
<dbReference type="OrthoDB" id="9805576at2"/>
<dbReference type="UniPathway" id="UPA00618">
    <property type="reaction ID" value="UER00672"/>
</dbReference>
<dbReference type="Proteomes" id="UP000001412">
    <property type="component" value="Chromosome"/>
</dbReference>
<dbReference type="GO" id="GO:0005829">
    <property type="term" value="C:cytosol"/>
    <property type="evidence" value="ECO:0007669"/>
    <property type="project" value="TreeGrafter"/>
</dbReference>
<dbReference type="GO" id="GO:0005524">
    <property type="term" value="F:ATP binding"/>
    <property type="evidence" value="ECO:0007669"/>
    <property type="project" value="UniProtKB-UniRule"/>
</dbReference>
<dbReference type="GO" id="GO:0004370">
    <property type="term" value="F:glycerol kinase activity"/>
    <property type="evidence" value="ECO:0000250"/>
    <property type="project" value="UniProtKB"/>
</dbReference>
<dbReference type="GO" id="GO:0019563">
    <property type="term" value="P:glycerol catabolic process"/>
    <property type="evidence" value="ECO:0007669"/>
    <property type="project" value="UniProtKB-UniRule"/>
</dbReference>
<dbReference type="GO" id="GO:0006071">
    <property type="term" value="P:glycerol metabolic process"/>
    <property type="evidence" value="ECO:0000250"/>
    <property type="project" value="UniProtKB"/>
</dbReference>
<dbReference type="GO" id="GO:0006072">
    <property type="term" value="P:glycerol-3-phosphate metabolic process"/>
    <property type="evidence" value="ECO:0007669"/>
    <property type="project" value="InterPro"/>
</dbReference>
<dbReference type="CDD" id="cd07786">
    <property type="entry name" value="FGGY_EcGK_like"/>
    <property type="match status" value="1"/>
</dbReference>
<dbReference type="FunFam" id="3.30.420.40:FF:000007">
    <property type="entry name" value="Glycerol kinase"/>
    <property type="match status" value="1"/>
</dbReference>
<dbReference type="FunFam" id="3.30.420.40:FF:000008">
    <property type="entry name" value="Glycerol kinase"/>
    <property type="match status" value="1"/>
</dbReference>
<dbReference type="Gene3D" id="3.30.420.40">
    <property type="match status" value="2"/>
</dbReference>
<dbReference type="HAMAP" id="MF_00186">
    <property type="entry name" value="Glycerol_kin"/>
    <property type="match status" value="1"/>
</dbReference>
<dbReference type="InterPro" id="IPR043129">
    <property type="entry name" value="ATPase_NBD"/>
</dbReference>
<dbReference type="InterPro" id="IPR000577">
    <property type="entry name" value="Carb_kinase_FGGY"/>
</dbReference>
<dbReference type="InterPro" id="IPR018483">
    <property type="entry name" value="Carb_kinase_FGGY_CS"/>
</dbReference>
<dbReference type="InterPro" id="IPR018485">
    <property type="entry name" value="FGGY_C"/>
</dbReference>
<dbReference type="InterPro" id="IPR018484">
    <property type="entry name" value="FGGY_N"/>
</dbReference>
<dbReference type="InterPro" id="IPR005999">
    <property type="entry name" value="Glycerol_kin"/>
</dbReference>
<dbReference type="NCBIfam" id="TIGR01311">
    <property type="entry name" value="glycerol_kin"/>
    <property type="match status" value="1"/>
</dbReference>
<dbReference type="NCBIfam" id="NF000756">
    <property type="entry name" value="PRK00047.1"/>
    <property type="match status" value="1"/>
</dbReference>
<dbReference type="PANTHER" id="PTHR10196:SF69">
    <property type="entry name" value="GLYCEROL KINASE"/>
    <property type="match status" value="1"/>
</dbReference>
<dbReference type="PANTHER" id="PTHR10196">
    <property type="entry name" value="SUGAR KINASE"/>
    <property type="match status" value="1"/>
</dbReference>
<dbReference type="Pfam" id="PF02782">
    <property type="entry name" value="FGGY_C"/>
    <property type="match status" value="1"/>
</dbReference>
<dbReference type="Pfam" id="PF00370">
    <property type="entry name" value="FGGY_N"/>
    <property type="match status" value="1"/>
</dbReference>
<dbReference type="PIRSF" id="PIRSF000538">
    <property type="entry name" value="GlpK"/>
    <property type="match status" value="1"/>
</dbReference>
<dbReference type="SUPFAM" id="SSF53067">
    <property type="entry name" value="Actin-like ATPase domain"/>
    <property type="match status" value="2"/>
</dbReference>
<dbReference type="PROSITE" id="PS00933">
    <property type="entry name" value="FGGY_KINASES_1"/>
    <property type="match status" value="1"/>
</dbReference>
<dbReference type="PROSITE" id="PS00445">
    <property type="entry name" value="FGGY_KINASES_2"/>
    <property type="match status" value="1"/>
</dbReference>
<gene>
    <name evidence="1" type="primary">glpK2</name>
    <name type="ordered locus">CTC_02462</name>
</gene>
<reference key="1">
    <citation type="journal article" date="2003" name="Proc. Natl. Acad. Sci. U.S.A.">
        <title>The genome sequence of Clostridium tetani, the causative agent of tetanus disease.</title>
        <authorList>
            <person name="Brueggemann H."/>
            <person name="Baeumer S."/>
            <person name="Fricke W.F."/>
            <person name="Wiezer A."/>
            <person name="Liesegang H."/>
            <person name="Decker I."/>
            <person name="Herzberg C."/>
            <person name="Martinez-Arias R."/>
            <person name="Merkl R."/>
            <person name="Henne A."/>
            <person name="Gottschalk G."/>
        </authorList>
    </citation>
    <scope>NUCLEOTIDE SEQUENCE [LARGE SCALE GENOMIC DNA]</scope>
    <source>
        <strain>Massachusetts / E88</strain>
    </source>
</reference>
<evidence type="ECO:0000255" key="1">
    <source>
        <dbReference type="HAMAP-Rule" id="MF_00186"/>
    </source>
</evidence>
<organism>
    <name type="scientific">Clostridium tetani (strain Massachusetts / E88)</name>
    <dbReference type="NCBI Taxonomy" id="212717"/>
    <lineage>
        <taxon>Bacteria</taxon>
        <taxon>Bacillati</taxon>
        <taxon>Bacillota</taxon>
        <taxon>Clostridia</taxon>
        <taxon>Eubacteriales</taxon>
        <taxon>Clostridiaceae</taxon>
        <taxon>Clostridium</taxon>
    </lineage>
</organism>
<name>GLPK2_CLOTE</name>
<feature type="chain" id="PRO_0000059446" description="Glycerol kinase 2">
    <location>
        <begin position="1"/>
        <end position="493"/>
    </location>
</feature>
<feature type="binding site" evidence="1">
    <location>
        <position position="12"/>
    </location>
    <ligand>
        <name>ADP</name>
        <dbReference type="ChEBI" id="CHEBI:456216"/>
    </ligand>
</feature>
<feature type="binding site" evidence="1">
    <location>
        <position position="12"/>
    </location>
    <ligand>
        <name>ATP</name>
        <dbReference type="ChEBI" id="CHEBI:30616"/>
    </ligand>
</feature>
<feature type="binding site" evidence="1">
    <location>
        <position position="12"/>
    </location>
    <ligand>
        <name>sn-glycerol 3-phosphate</name>
        <dbReference type="ChEBI" id="CHEBI:57597"/>
    </ligand>
</feature>
<feature type="binding site" evidence="1">
    <location>
        <position position="13"/>
    </location>
    <ligand>
        <name>ATP</name>
        <dbReference type="ChEBI" id="CHEBI:30616"/>
    </ligand>
</feature>
<feature type="binding site" evidence="1">
    <location>
        <position position="16"/>
    </location>
    <ligand>
        <name>ADP</name>
        <dbReference type="ChEBI" id="CHEBI:456216"/>
    </ligand>
</feature>
<feature type="binding site" evidence="1">
    <location>
        <position position="82"/>
    </location>
    <ligand>
        <name>glycerol</name>
        <dbReference type="ChEBI" id="CHEBI:17754"/>
    </ligand>
</feature>
<feature type="binding site" evidence="1">
    <location>
        <position position="82"/>
    </location>
    <ligand>
        <name>sn-glycerol 3-phosphate</name>
        <dbReference type="ChEBI" id="CHEBI:57597"/>
    </ligand>
</feature>
<feature type="binding site" evidence="1">
    <location>
        <position position="83"/>
    </location>
    <ligand>
        <name>glycerol</name>
        <dbReference type="ChEBI" id="CHEBI:17754"/>
    </ligand>
</feature>
<feature type="binding site" evidence="1">
    <location>
        <position position="83"/>
    </location>
    <ligand>
        <name>sn-glycerol 3-phosphate</name>
        <dbReference type="ChEBI" id="CHEBI:57597"/>
    </ligand>
</feature>
<feature type="binding site" evidence="1">
    <location>
        <position position="134"/>
    </location>
    <ligand>
        <name>glycerol</name>
        <dbReference type="ChEBI" id="CHEBI:17754"/>
    </ligand>
</feature>
<feature type="binding site" evidence="1">
    <location>
        <position position="134"/>
    </location>
    <ligand>
        <name>sn-glycerol 3-phosphate</name>
        <dbReference type="ChEBI" id="CHEBI:57597"/>
    </ligand>
</feature>
<feature type="binding site" evidence="1">
    <location>
        <position position="243"/>
    </location>
    <ligand>
        <name>glycerol</name>
        <dbReference type="ChEBI" id="CHEBI:17754"/>
    </ligand>
</feature>
<feature type="binding site" evidence="1">
    <location>
        <position position="243"/>
    </location>
    <ligand>
        <name>sn-glycerol 3-phosphate</name>
        <dbReference type="ChEBI" id="CHEBI:57597"/>
    </ligand>
</feature>
<feature type="binding site" evidence="1">
    <location>
        <position position="244"/>
    </location>
    <ligand>
        <name>glycerol</name>
        <dbReference type="ChEBI" id="CHEBI:17754"/>
    </ligand>
</feature>
<feature type="binding site" evidence="1">
    <location>
        <position position="265"/>
    </location>
    <ligand>
        <name>ADP</name>
        <dbReference type="ChEBI" id="CHEBI:456216"/>
    </ligand>
</feature>
<feature type="binding site" evidence="1">
    <location>
        <position position="265"/>
    </location>
    <ligand>
        <name>ATP</name>
        <dbReference type="ChEBI" id="CHEBI:30616"/>
    </ligand>
</feature>
<feature type="binding site" evidence="1">
    <location>
        <position position="308"/>
    </location>
    <ligand>
        <name>ADP</name>
        <dbReference type="ChEBI" id="CHEBI:456216"/>
    </ligand>
</feature>
<feature type="binding site" evidence="1">
    <location>
        <position position="308"/>
    </location>
    <ligand>
        <name>ATP</name>
        <dbReference type="ChEBI" id="CHEBI:30616"/>
    </ligand>
</feature>
<feature type="binding site" evidence="1">
    <location>
        <position position="312"/>
    </location>
    <ligand>
        <name>ATP</name>
        <dbReference type="ChEBI" id="CHEBI:30616"/>
    </ligand>
</feature>
<feature type="binding site" evidence="1">
    <location>
        <position position="413"/>
    </location>
    <ligand>
        <name>ADP</name>
        <dbReference type="ChEBI" id="CHEBI:456216"/>
    </ligand>
</feature>
<keyword id="KW-0067">ATP-binding</keyword>
<keyword id="KW-0319">Glycerol metabolism</keyword>
<keyword id="KW-0418">Kinase</keyword>
<keyword id="KW-0547">Nucleotide-binding</keyword>
<keyword id="KW-1185">Reference proteome</keyword>
<keyword id="KW-0808">Transferase</keyword>
<proteinExistence type="inferred from homology"/>
<sequence>MEEYIMVLDQGSTRSKCILFDKKGEVLGESEREVEPIYPKLGWMEYNPVNIWASQFSVTTELLAKYNISIEKIASIGITNQRETVLVWDKRTGIPVYNAIAWQCRRTVEISEELNKKGYGKVIKEKTGLVLDPYFSATKIKWILDNVEGARKEAERGNLAFGTMDSWLIWNLTKGEKHMTDYSNASRTMLFNIHTLQWDEELLEIFQIPKSMLPEVGPSSHVYGHTDSILFGKEVPIGGVAGDQNSSLFGQTAFEEGAAKNTYGTGCFMLMNTGNKPINSQKGLITTIAWGLDGEVTYALEGSVFMAGEGINWIKDNLRMIDSLEDAEEYALSVEDTNNVYMVPAFGGLGAPYWNPEAKGVVIGLTRGSKKEHFIRAVIESLAYQSYDVLKAMEEDSGIVLKNLRVDGQYSVNNFLMQFQSDILNCKVEKPKNILNIAGLGAAYFAGLAVGFWKNKEDILKNNGIEKEFNSSIDDRRRKVLVEGWKEAIKRTI</sequence>
<comment type="function">
    <text evidence="1">Key enzyme in the regulation of glycerol uptake and metabolism. Catalyzes the phosphorylation of glycerol to yield sn-glycerol 3-phosphate.</text>
</comment>
<comment type="catalytic activity">
    <reaction evidence="1">
        <text>glycerol + ATP = sn-glycerol 3-phosphate + ADP + H(+)</text>
        <dbReference type="Rhea" id="RHEA:21644"/>
        <dbReference type="ChEBI" id="CHEBI:15378"/>
        <dbReference type="ChEBI" id="CHEBI:17754"/>
        <dbReference type="ChEBI" id="CHEBI:30616"/>
        <dbReference type="ChEBI" id="CHEBI:57597"/>
        <dbReference type="ChEBI" id="CHEBI:456216"/>
        <dbReference type="EC" id="2.7.1.30"/>
    </reaction>
</comment>
<comment type="activity regulation">
    <text evidence="1">Activated by phosphorylation and inhibited by fructose 1,6-bisphosphate (FBP).</text>
</comment>
<comment type="pathway">
    <text evidence="1">Polyol metabolism; glycerol degradation via glycerol kinase pathway; sn-glycerol 3-phosphate from glycerol: step 1/1.</text>
</comment>
<comment type="subunit">
    <text evidence="1">Homotetramer and homodimer (in equilibrium).</text>
</comment>
<comment type="similarity">
    <text evidence="1">Belongs to the FGGY kinase family.</text>
</comment>
<protein>
    <recommendedName>
        <fullName evidence="1">Glycerol kinase 2</fullName>
        <ecNumber evidence="1">2.7.1.30</ecNumber>
    </recommendedName>
    <alternativeName>
        <fullName evidence="1">ATP:glycerol 3-phosphotransferase 2</fullName>
    </alternativeName>
    <alternativeName>
        <fullName evidence="1">Glycerokinase 2</fullName>
        <shortName evidence="1">GK 2</shortName>
    </alternativeName>
</protein>
<accession>Q891B8</accession>